<reference key="1">
    <citation type="submission" date="2007-04" db="EMBL/GenBank/DDBJ databases">
        <title>Complete sequence of chromosome of Mycobacterium gilvum PYR-GCK.</title>
        <authorList>
            <consortium name="US DOE Joint Genome Institute"/>
            <person name="Copeland A."/>
            <person name="Lucas S."/>
            <person name="Lapidus A."/>
            <person name="Barry K."/>
            <person name="Detter J.C."/>
            <person name="Glavina del Rio T."/>
            <person name="Hammon N."/>
            <person name="Israni S."/>
            <person name="Dalin E."/>
            <person name="Tice H."/>
            <person name="Pitluck S."/>
            <person name="Chain P."/>
            <person name="Malfatti S."/>
            <person name="Shin M."/>
            <person name="Vergez L."/>
            <person name="Schmutz J."/>
            <person name="Larimer F."/>
            <person name="Land M."/>
            <person name="Hauser L."/>
            <person name="Kyrpides N."/>
            <person name="Mikhailova N."/>
            <person name="Miller C."/>
            <person name="Richardson P."/>
        </authorList>
    </citation>
    <scope>NUCLEOTIDE SEQUENCE [LARGE SCALE GENOMIC DNA]</scope>
    <source>
        <strain>PYR-GCK</strain>
    </source>
</reference>
<sequence>MARTDGDTWDLASSVGATATSVAASRAFASRGPDALIDDPYARLLVEAVGLPHFVKVARGEIDFDGDPLFGAQQAINQIVVRTRIFDDFLTDAGQREPQIRQAVILASGLDTRAYRLDWPAGTVVYEIDQPEVIDFKTAVLTDAGVAPAADRRTVGIDLREDWPTALRDAGFDPDRPTAWIAEGLLPYLPPDAQDRLLDSITALSAPGSRLATEHMDAKALTGDWAKAMTERARRHGSDIDLTKLFYNGERRSATEHLGAVGWQTSVQTSNDAYIANGFGPIRDDLLAMIGDSGYLTAWRP</sequence>
<comment type="function">
    <text evidence="1">Exhibits S-adenosyl-L-methionine-dependent methyltransferase activity.</text>
</comment>
<comment type="similarity">
    <text evidence="2">Belongs to the UPF0677 family.</text>
</comment>
<gene>
    <name type="ordered locus">Mflv_5024</name>
</gene>
<name>Y5024_MYCGI</name>
<accession>A4TEE0</accession>
<proteinExistence type="inferred from homology"/>
<evidence type="ECO:0000250" key="1"/>
<evidence type="ECO:0000305" key="2"/>
<dbReference type="EC" id="2.1.1.-"/>
<dbReference type="EMBL" id="CP000656">
    <property type="protein sequence ID" value="ABP47490.1"/>
    <property type="molecule type" value="Genomic_DNA"/>
</dbReference>
<dbReference type="SMR" id="A4TEE0"/>
<dbReference type="STRING" id="350054.Mflv_5024"/>
<dbReference type="KEGG" id="mgi:Mflv_5024"/>
<dbReference type="eggNOG" id="COG3315">
    <property type="taxonomic scope" value="Bacteria"/>
</dbReference>
<dbReference type="HOGENOM" id="CLU_056160_2_1_11"/>
<dbReference type="OrthoDB" id="9806164at2"/>
<dbReference type="GO" id="GO:0008168">
    <property type="term" value="F:methyltransferase activity"/>
    <property type="evidence" value="ECO:0007669"/>
    <property type="project" value="UniProtKB-KW"/>
</dbReference>
<dbReference type="GO" id="GO:0032259">
    <property type="term" value="P:methylation"/>
    <property type="evidence" value="ECO:0007669"/>
    <property type="project" value="UniProtKB-KW"/>
</dbReference>
<dbReference type="Gene3D" id="3.40.50.150">
    <property type="entry name" value="Vaccinia Virus protein VP39"/>
    <property type="match status" value="1"/>
</dbReference>
<dbReference type="InterPro" id="IPR007213">
    <property type="entry name" value="Ppm1/Ppm2/Tcmp"/>
</dbReference>
<dbReference type="InterPro" id="IPR029063">
    <property type="entry name" value="SAM-dependent_MTases_sf"/>
</dbReference>
<dbReference type="InterPro" id="IPR011610">
    <property type="entry name" value="SAM_mthyl_Trfase_ML2640-like"/>
</dbReference>
<dbReference type="NCBIfam" id="TIGR00027">
    <property type="entry name" value="mthyl_TIGR00027"/>
    <property type="match status" value="1"/>
</dbReference>
<dbReference type="PANTHER" id="PTHR43619">
    <property type="entry name" value="S-ADENOSYL-L-METHIONINE-DEPENDENT METHYLTRANSFERASE YKTD-RELATED"/>
    <property type="match status" value="1"/>
</dbReference>
<dbReference type="PANTHER" id="PTHR43619:SF2">
    <property type="entry name" value="S-ADENOSYL-L-METHIONINE-DEPENDENT METHYLTRANSFERASES SUPERFAMILY PROTEIN"/>
    <property type="match status" value="1"/>
</dbReference>
<dbReference type="Pfam" id="PF04072">
    <property type="entry name" value="LCM"/>
    <property type="match status" value="1"/>
</dbReference>
<dbReference type="SUPFAM" id="SSF53335">
    <property type="entry name" value="S-adenosyl-L-methionine-dependent methyltransferases"/>
    <property type="match status" value="1"/>
</dbReference>
<keyword id="KW-0489">Methyltransferase</keyword>
<keyword id="KW-0949">S-adenosyl-L-methionine</keyword>
<keyword id="KW-0808">Transferase</keyword>
<protein>
    <recommendedName>
        <fullName>Putative S-adenosyl-L-methionine-dependent methyltransferase Mflv_5024</fullName>
        <ecNumber>2.1.1.-</ecNumber>
    </recommendedName>
</protein>
<feature type="chain" id="PRO_0000361156" description="Putative S-adenosyl-L-methionine-dependent methyltransferase Mflv_5024">
    <location>
        <begin position="1"/>
        <end position="301"/>
    </location>
</feature>
<feature type="binding site" evidence="1">
    <location>
        <position position="129"/>
    </location>
    <ligand>
        <name>S-adenosyl-L-methionine</name>
        <dbReference type="ChEBI" id="CHEBI:59789"/>
    </ligand>
</feature>
<feature type="binding site" evidence="1">
    <location>
        <begin position="158"/>
        <end position="159"/>
    </location>
    <ligand>
        <name>S-adenosyl-L-methionine</name>
        <dbReference type="ChEBI" id="CHEBI:59789"/>
    </ligand>
</feature>
<organism>
    <name type="scientific">Mycolicibacterium gilvum (strain PYR-GCK)</name>
    <name type="common">Mycobacterium gilvum (strain PYR-GCK)</name>
    <dbReference type="NCBI Taxonomy" id="350054"/>
    <lineage>
        <taxon>Bacteria</taxon>
        <taxon>Bacillati</taxon>
        <taxon>Actinomycetota</taxon>
        <taxon>Actinomycetes</taxon>
        <taxon>Mycobacteriales</taxon>
        <taxon>Mycobacteriaceae</taxon>
        <taxon>Mycolicibacterium</taxon>
    </lineage>
</organism>